<proteinExistence type="inferred from homology"/>
<accession>Q5HPE0</accession>
<keyword id="KW-0963">Cytoplasm</keyword>
<keyword id="KW-1185">Reference proteome</keyword>
<protein>
    <recommendedName>
        <fullName>Cold shock protein CspA</fullName>
    </recommendedName>
</protein>
<gene>
    <name type="primary">cspA</name>
    <name type="ordered locus">SERP0972</name>
</gene>
<dbReference type="EMBL" id="CP000029">
    <property type="protein sequence ID" value="AAW54312.1"/>
    <property type="status" value="ALT_INIT"/>
    <property type="molecule type" value="Genomic_DNA"/>
</dbReference>
<dbReference type="RefSeq" id="WP_001831260.1">
    <property type="nucleotide sequence ID" value="NC_002976.3"/>
</dbReference>
<dbReference type="SMR" id="Q5HPE0"/>
<dbReference type="STRING" id="176279.SERP0972"/>
<dbReference type="GeneID" id="97287790"/>
<dbReference type="KEGG" id="ser:SERP0972"/>
<dbReference type="eggNOG" id="COG1278">
    <property type="taxonomic scope" value="Bacteria"/>
</dbReference>
<dbReference type="HOGENOM" id="CLU_117621_6_1_9"/>
<dbReference type="Proteomes" id="UP000000531">
    <property type="component" value="Chromosome"/>
</dbReference>
<dbReference type="GO" id="GO:0005737">
    <property type="term" value="C:cytoplasm"/>
    <property type="evidence" value="ECO:0007669"/>
    <property type="project" value="UniProtKB-SubCell"/>
</dbReference>
<dbReference type="GO" id="GO:0003676">
    <property type="term" value="F:nucleic acid binding"/>
    <property type="evidence" value="ECO:0007669"/>
    <property type="project" value="InterPro"/>
</dbReference>
<dbReference type="CDD" id="cd04458">
    <property type="entry name" value="CSP_CDS"/>
    <property type="match status" value="1"/>
</dbReference>
<dbReference type="FunFam" id="2.40.50.140:FF:000006">
    <property type="entry name" value="Cold shock protein CspC"/>
    <property type="match status" value="1"/>
</dbReference>
<dbReference type="Gene3D" id="6.20.370.130">
    <property type="match status" value="1"/>
</dbReference>
<dbReference type="Gene3D" id="2.40.50.140">
    <property type="entry name" value="Nucleic acid-binding proteins"/>
    <property type="match status" value="1"/>
</dbReference>
<dbReference type="InterPro" id="IPR012156">
    <property type="entry name" value="Cold_shock_CspA"/>
</dbReference>
<dbReference type="InterPro" id="IPR050181">
    <property type="entry name" value="Cold_shock_domain"/>
</dbReference>
<dbReference type="InterPro" id="IPR011129">
    <property type="entry name" value="CSD"/>
</dbReference>
<dbReference type="InterPro" id="IPR019844">
    <property type="entry name" value="CSD_CS"/>
</dbReference>
<dbReference type="InterPro" id="IPR002059">
    <property type="entry name" value="CSP_DNA-bd"/>
</dbReference>
<dbReference type="InterPro" id="IPR012340">
    <property type="entry name" value="NA-bd_OB-fold"/>
</dbReference>
<dbReference type="PANTHER" id="PTHR11544">
    <property type="entry name" value="COLD SHOCK DOMAIN CONTAINING PROTEINS"/>
    <property type="match status" value="1"/>
</dbReference>
<dbReference type="Pfam" id="PF00313">
    <property type="entry name" value="CSD"/>
    <property type="match status" value="1"/>
</dbReference>
<dbReference type="PIRSF" id="PIRSF002599">
    <property type="entry name" value="Cold_shock_A"/>
    <property type="match status" value="1"/>
</dbReference>
<dbReference type="PRINTS" id="PR00050">
    <property type="entry name" value="COLDSHOCK"/>
</dbReference>
<dbReference type="SMART" id="SM00357">
    <property type="entry name" value="CSP"/>
    <property type="match status" value="1"/>
</dbReference>
<dbReference type="SUPFAM" id="SSF50249">
    <property type="entry name" value="Nucleic acid-binding proteins"/>
    <property type="match status" value="1"/>
</dbReference>
<dbReference type="PROSITE" id="PS00352">
    <property type="entry name" value="CSD_1"/>
    <property type="match status" value="1"/>
</dbReference>
<dbReference type="PROSITE" id="PS51857">
    <property type="entry name" value="CSD_2"/>
    <property type="match status" value="1"/>
</dbReference>
<evidence type="ECO:0000250" key="1"/>
<evidence type="ECO:0000305" key="2"/>
<reference key="1">
    <citation type="journal article" date="2005" name="J. Bacteriol.">
        <title>Insights on evolution of virulence and resistance from the complete genome analysis of an early methicillin-resistant Staphylococcus aureus strain and a biofilm-producing methicillin-resistant Staphylococcus epidermidis strain.</title>
        <authorList>
            <person name="Gill S.R."/>
            <person name="Fouts D.E."/>
            <person name="Archer G.L."/>
            <person name="Mongodin E.F."/>
            <person name="DeBoy R.T."/>
            <person name="Ravel J."/>
            <person name="Paulsen I.T."/>
            <person name="Kolonay J.F."/>
            <person name="Brinkac L.M."/>
            <person name="Beanan M.J."/>
            <person name="Dodson R.J."/>
            <person name="Daugherty S.C."/>
            <person name="Madupu R."/>
            <person name="Angiuoli S.V."/>
            <person name="Durkin A.S."/>
            <person name="Haft D.H."/>
            <person name="Vamathevan J.J."/>
            <person name="Khouri H."/>
            <person name="Utterback T.R."/>
            <person name="Lee C."/>
            <person name="Dimitrov G."/>
            <person name="Jiang L."/>
            <person name="Qin H."/>
            <person name="Weidman J."/>
            <person name="Tran K."/>
            <person name="Kang K.H."/>
            <person name="Hance I.R."/>
            <person name="Nelson K.E."/>
            <person name="Fraser C.M."/>
        </authorList>
    </citation>
    <scope>NUCLEOTIDE SEQUENCE [LARGE SCALE GENOMIC DNA]</scope>
    <source>
        <strain>ATCC 35984 / DSM 28319 / BCRC 17069 / CCUG 31568 / BM 3577 / RP62A</strain>
    </source>
</reference>
<feature type="chain" id="PRO_0000262547" description="Cold shock protein CspA">
    <location>
        <begin position="1"/>
        <end position="66"/>
    </location>
</feature>
<feature type="domain" description="CSD">
    <location>
        <begin position="1"/>
        <end position="66"/>
    </location>
</feature>
<comment type="function">
    <text evidence="1">Involved in cold stress response.</text>
</comment>
<comment type="subcellular location">
    <subcellularLocation>
        <location evidence="1">Cytoplasm</location>
    </subcellularLocation>
</comment>
<comment type="sequence caution" evidence="2">
    <conflict type="erroneous initiation">
        <sequence resource="EMBL-CDS" id="AAW54312"/>
    </conflict>
</comment>
<sequence>MKQGTVKWFNAEKGFGFIEVEGENDVFVHFSAINQEGYKSLEEGQSVEFEVVEGDRGPQAANVVKL</sequence>
<name>CSPA_STAEQ</name>
<organism>
    <name type="scientific">Staphylococcus epidermidis (strain ATCC 35984 / DSM 28319 / BCRC 17069 / CCUG 31568 / BM 3577 / RP62A)</name>
    <dbReference type="NCBI Taxonomy" id="176279"/>
    <lineage>
        <taxon>Bacteria</taxon>
        <taxon>Bacillati</taxon>
        <taxon>Bacillota</taxon>
        <taxon>Bacilli</taxon>
        <taxon>Bacillales</taxon>
        <taxon>Staphylococcaceae</taxon>
        <taxon>Staphylococcus</taxon>
    </lineage>
</organism>